<proteinExistence type="inferred from homology"/>
<feature type="chain" id="PRO_0000341936" description="2-succinyl-6-hydroxy-2,4-cyclohexadiene-1-carboxylate synthase">
    <location>
        <begin position="1"/>
        <end position="272"/>
    </location>
</feature>
<sequence length="272" mass="30258">MTTLACQKLAPHPESPRHQHAGPWLVWLHGLLGSGQDWLPVAQLCGDYPSLLIDLPGHGQSVSLSADGFADISRQLSQTLQANGIREYWLAGYSLGGRIAIYHACYGRHHGLQGLLVEGGNLGLENAELRQARLQQDRQWAQRFRQEPLPQVLDDWYQQAVFADLDPQQREQLVLLRADNHGTAVAEMLEATSLGHQPWLLPALQRLNVPYTYLCGDRDHKFLQLAQQYRLPLHTLARAGHNAHRANPGAFAAQVLAFLSQSSCLPPSSLSR</sequence>
<organism>
    <name type="scientific">Yersinia pseudotuberculosis serotype O:3 (strain YPIII)</name>
    <dbReference type="NCBI Taxonomy" id="502800"/>
    <lineage>
        <taxon>Bacteria</taxon>
        <taxon>Pseudomonadati</taxon>
        <taxon>Pseudomonadota</taxon>
        <taxon>Gammaproteobacteria</taxon>
        <taxon>Enterobacterales</taxon>
        <taxon>Yersiniaceae</taxon>
        <taxon>Yersinia</taxon>
    </lineage>
</organism>
<reference key="1">
    <citation type="submission" date="2008-02" db="EMBL/GenBank/DDBJ databases">
        <title>Complete sequence of Yersinia pseudotuberculosis YPIII.</title>
        <authorList>
            <consortium name="US DOE Joint Genome Institute"/>
            <person name="Copeland A."/>
            <person name="Lucas S."/>
            <person name="Lapidus A."/>
            <person name="Glavina del Rio T."/>
            <person name="Dalin E."/>
            <person name="Tice H."/>
            <person name="Bruce D."/>
            <person name="Goodwin L."/>
            <person name="Pitluck S."/>
            <person name="Munk A.C."/>
            <person name="Brettin T."/>
            <person name="Detter J.C."/>
            <person name="Han C."/>
            <person name="Tapia R."/>
            <person name="Schmutz J."/>
            <person name="Larimer F."/>
            <person name="Land M."/>
            <person name="Hauser L."/>
            <person name="Challacombe J.F."/>
            <person name="Green L."/>
            <person name="Lindler L.E."/>
            <person name="Nikolich M.P."/>
            <person name="Richardson P."/>
        </authorList>
    </citation>
    <scope>NUCLEOTIDE SEQUENCE [LARGE SCALE GENOMIC DNA]</scope>
    <source>
        <strain>YPIII</strain>
    </source>
</reference>
<protein>
    <recommendedName>
        <fullName evidence="1">2-succinyl-6-hydroxy-2,4-cyclohexadiene-1-carboxylate synthase</fullName>
        <shortName evidence="1">SHCHC synthase</shortName>
        <ecNumber evidence="1">4.2.99.20</ecNumber>
    </recommendedName>
</protein>
<name>MENH_YERPY</name>
<evidence type="ECO:0000255" key="1">
    <source>
        <dbReference type="HAMAP-Rule" id="MF_01660"/>
    </source>
</evidence>
<accession>B1JH89</accession>
<gene>
    <name evidence="1" type="primary">menH</name>
    <name type="ordered locus">YPK_1590</name>
</gene>
<keyword id="KW-0456">Lyase</keyword>
<keyword id="KW-0474">Menaquinone biosynthesis</keyword>
<comment type="function">
    <text evidence="1">Catalyzes a proton abstraction reaction that results in 2,5-elimination of pyruvate from 2-succinyl-5-enolpyruvyl-6-hydroxy-3-cyclohexene-1-carboxylate (SEPHCHC) and the formation of 2-succinyl-6-hydroxy-2,4-cyclohexadiene-1-carboxylate (SHCHC).</text>
</comment>
<comment type="catalytic activity">
    <reaction evidence="1">
        <text>5-enolpyruvoyl-6-hydroxy-2-succinyl-cyclohex-3-ene-1-carboxylate = (1R,6R)-6-hydroxy-2-succinyl-cyclohexa-2,4-diene-1-carboxylate + pyruvate</text>
        <dbReference type="Rhea" id="RHEA:25597"/>
        <dbReference type="ChEBI" id="CHEBI:15361"/>
        <dbReference type="ChEBI" id="CHEBI:58689"/>
        <dbReference type="ChEBI" id="CHEBI:58818"/>
        <dbReference type="EC" id="4.2.99.20"/>
    </reaction>
</comment>
<comment type="pathway">
    <text evidence="1">Quinol/quinone metabolism; 1,4-dihydroxy-2-naphthoate biosynthesis; 1,4-dihydroxy-2-naphthoate from chorismate: step 3/7.</text>
</comment>
<comment type="pathway">
    <text evidence="1">Quinol/quinone metabolism; menaquinone biosynthesis.</text>
</comment>
<comment type="subunit">
    <text evidence="1">Monomer.</text>
</comment>
<comment type="similarity">
    <text evidence="1">Belongs to the AB hydrolase superfamily. MenH family.</text>
</comment>
<dbReference type="EC" id="4.2.99.20" evidence="1"/>
<dbReference type="EMBL" id="CP000950">
    <property type="protein sequence ID" value="ACA67883.1"/>
    <property type="molecule type" value="Genomic_DNA"/>
</dbReference>
<dbReference type="RefSeq" id="WP_011192655.1">
    <property type="nucleotide sequence ID" value="NZ_CP009792.1"/>
</dbReference>
<dbReference type="SMR" id="B1JH89"/>
<dbReference type="ESTHER" id="yerpe-YPO2526">
    <property type="family name" value="MenH_SHCHC"/>
</dbReference>
<dbReference type="KEGG" id="ypy:YPK_1590"/>
<dbReference type="PATRIC" id="fig|502800.11.peg.2237"/>
<dbReference type="UniPathway" id="UPA00079"/>
<dbReference type="UniPathway" id="UPA01057">
    <property type="reaction ID" value="UER00900"/>
</dbReference>
<dbReference type="GO" id="GO:0070205">
    <property type="term" value="F:2-succinyl-6-hydroxy-2,4-cyclohexadiene-1-carboxylate synthase activity"/>
    <property type="evidence" value="ECO:0007669"/>
    <property type="project" value="UniProtKB-UniRule"/>
</dbReference>
<dbReference type="GO" id="GO:0009234">
    <property type="term" value="P:menaquinone biosynthetic process"/>
    <property type="evidence" value="ECO:0007669"/>
    <property type="project" value="UniProtKB-UniRule"/>
</dbReference>
<dbReference type="Gene3D" id="3.40.50.1820">
    <property type="entry name" value="alpha/beta hydrolase"/>
    <property type="match status" value="1"/>
</dbReference>
<dbReference type="HAMAP" id="MF_01660">
    <property type="entry name" value="MenH"/>
    <property type="match status" value="1"/>
</dbReference>
<dbReference type="InterPro" id="IPR000073">
    <property type="entry name" value="AB_hydrolase_1"/>
</dbReference>
<dbReference type="InterPro" id="IPR029058">
    <property type="entry name" value="AB_hydrolase_fold"/>
</dbReference>
<dbReference type="InterPro" id="IPR022485">
    <property type="entry name" value="SHCHC_synthase_MenH"/>
</dbReference>
<dbReference type="NCBIfam" id="TIGR03695">
    <property type="entry name" value="menH_SHCHC"/>
    <property type="match status" value="1"/>
</dbReference>
<dbReference type="NCBIfam" id="NF008340">
    <property type="entry name" value="PRK11126.1"/>
    <property type="match status" value="1"/>
</dbReference>
<dbReference type="PANTHER" id="PTHR42916">
    <property type="entry name" value="2-SUCCINYL-5-ENOLPYRUVYL-6-HYDROXY-3-CYCLOHEXENE-1-CARBOXYLATE SYNTHASE"/>
    <property type="match status" value="1"/>
</dbReference>
<dbReference type="PANTHER" id="PTHR42916:SF1">
    <property type="entry name" value="PROTEIN PHYLLO, CHLOROPLASTIC"/>
    <property type="match status" value="1"/>
</dbReference>
<dbReference type="Pfam" id="PF12697">
    <property type="entry name" value="Abhydrolase_6"/>
    <property type="match status" value="1"/>
</dbReference>
<dbReference type="SUPFAM" id="SSF53474">
    <property type="entry name" value="alpha/beta-Hydrolases"/>
    <property type="match status" value="1"/>
</dbReference>